<feature type="chain" id="PRO_0000311584" description="Iron-sulfur cluster insertion protein ErpA">
    <location>
        <begin position="1"/>
        <end position="114"/>
    </location>
</feature>
<feature type="binding site" evidence="1">
    <location>
        <position position="42"/>
    </location>
    <ligand>
        <name>iron-sulfur cluster</name>
        <dbReference type="ChEBI" id="CHEBI:30408"/>
    </ligand>
</feature>
<feature type="binding site" evidence="1">
    <location>
        <position position="106"/>
    </location>
    <ligand>
        <name>iron-sulfur cluster</name>
        <dbReference type="ChEBI" id="CHEBI:30408"/>
    </ligand>
</feature>
<feature type="binding site" evidence="1">
    <location>
        <position position="108"/>
    </location>
    <ligand>
        <name>iron-sulfur cluster</name>
        <dbReference type="ChEBI" id="CHEBI:30408"/>
    </ligand>
</feature>
<dbReference type="EMBL" id="CP000305">
    <property type="protein sequence ID" value="ABG17035.1"/>
    <property type="molecule type" value="Genomic_DNA"/>
</dbReference>
<dbReference type="EMBL" id="ACNQ01000007">
    <property type="protein sequence ID" value="EEO77895.1"/>
    <property type="molecule type" value="Genomic_DNA"/>
</dbReference>
<dbReference type="PIR" id="AE0411">
    <property type="entry name" value="AE0411"/>
</dbReference>
<dbReference type="RefSeq" id="WP_002209365.1">
    <property type="nucleotide sequence ID" value="NZ_ACNQ01000007.1"/>
</dbReference>
<dbReference type="SMR" id="Q1CLU5"/>
<dbReference type="GeneID" id="96664241"/>
<dbReference type="KEGG" id="ypn:YPN_0703"/>
<dbReference type="HOGENOM" id="CLU_069054_5_3_6"/>
<dbReference type="Proteomes" id="UP000008936">
    <property type="component" value="Chromosome"/>
</dbReference>
<dbReference type="GO" id="GO:0005829">
    <property type="term" value="C:cytosol"/>
    <property type="evidence" value="ECO:0007669"/>
    <property type="project" value="TreeGrafter"/>
</dbReference>
<dbReference type="GO" id="GO:0051537">
    <property type="term" value="F:2 iron, 2 sulfur cluster binding"/>
    <property type="evidence" value="ECO:0007669"/>
    <property type="project" value="TreeGrafter"/>
</dbReference>
<dbReference type="GO" id="GO:0051539">
    <property type="term" value="F:4 iron, 4 sulfur cluster binding"/>
    <property type="evidence" value="ECO:0007669"/>
    <property type="project" value="TreeGrafter"/>
</dbReference>
<dbReference type="GO" id="GO:0005506">
    <property type="term" value="F:iron ion binding"/>
    <property type="evidence" value="ECO:0007669"/>
    <property type="project" value="UniProtKB-UniRule"/>
</dbReference>
<dbReference type="GO" id="GO:0016226">
    <property type="term" value="P:iron-sulfur cluster assembly"/>
    <property type="evidence" value="ECO:0007669"/>
    <property type="project" value="UniProtKB-UniRule"/>
</dbReference>
<dbReference type="FunFam" id="2.60.300.12:FF:000002">
    <property type="entry name" value="Iron-sulfur cluster insertion protein ErpA"/>
    <property type="match status" value="1"/>
</dbReference>
<dbReference type="Gene3D" id="2.60.300.12">
    <property type="entry name" value="HesB-like domain"/>
    <property type="match status" value="1"/>
</dbReference>
<dbReference type="HAMAP" id="MF_01380">
    <property type="entry name" value="Fe_S_insert_ErpA"/>
    <property type="match status" value="1"/>
</dbReference>
<dbReference type="InterPro" id="IPR000361">
    <property type="entry name" value="FeS_biogenesis"/>
</dbReference>
<dbReference type="InterPro" id="IPR016092">
    <property type="entry name" value="FeS_cluster_insertion"/>
</dbReference>
<dbReference type="InterPro" id="IPR017870">
    <property type="entry name" value="FeS_cluster_insertion_CS"/>
</dbReference>
<dbReference type="InterPro" id="IPR023063">
    <property type="entry name" value="FeS_cluster_insertion_RrpA"/>
</dbReference>
<dbReference type="InterPro" id="IPR035903">
    <property type="entry name" value="HesB-like_dom_sf"/>
</dbReference>
<dbReference type="NCBIfam" id="TIGR00049">
    <property type="entry name" value="iron-sulfur cluster assembly accessory protein"/>
    <property type="match status" value="1"/>
</dbReference>
<dbReference type="NCBIfam" id="NF010147">
    <property type="entry name" value="PRK13623.1"/>
    <property type="match status" value="1"/>
</dbReference>
<dbReference type="PANTHER" id="PTHR43011">
    <property type="entry name" value="IRON-SULFUR CLUSTER ASSEMBLY 2 HOMOLOG, MITOCHONDRIAL"/>
    <property type="match status" value="1"/>
</dbReference>
<dbReference type="PANTHER" id="PTHR43011:SF1">
    <property type="entry name" value="IRON-SULFUR CLUSTER ASSEMBLY 2 HOMOLOG, MITOCHONDRIAL"/>
    <property type="match status" value="1"/>
</dbReference>
<dbReference type="Pfam" id="PF01521">
    <property type="entry name" value="Fe-S_biosyn"/>
    <property type="match status" value="1"/>
</dbReference>
<dbReference type="SUPFAM" id="SSF89360">
    <property type="entry name" value="HesB-like domain"/>
    <property type="match status" value="1"/>
</dbReference>
<dbReference type="PROSITE" id="PS01152">
    <property type="entry name" value="HESB"/>
    <property type="match status" value="1"/>
</dbReference>
<gene>
    <name evidence="1" type="primary">erpA</name>
    <name type="ordered locus">YPN_0703</name>
    <name type="ORF">YP516_0747</name>
</gene>
<sequence length="114" mass="12269">MSNETVLPLQFTEAAAKKVKLLISDEENPNLKLRVYITGGGCSGFQYGFTFDDQVNDGDMTIEKQGVELVVDPMSLQYLVGGAVDYTEGLEGSRFIVTNPNAKSTCGCGSSFSI</sequence>
<proteinExistence type="inferred from homology"/>
<name>ERPA_YERPN</name>
<comment type="function">
    <text evidence="1">Required for insertion of 4Fe-4S clusters for at least IspG.</text>
</comment>
<comment type="cofactor">
    <cofactor evidence="1">
        <name>iron-sulfur cluster</name>
        <dbReference type="ChEBI" id="CHEBI:30408"/>
    </cofactor>
    <text evidence="1">Binds 1 iron-sulfur cluster per subunit.</text>
</comment>
<comment type="subunit">
    <text evidence="1">Homodimer.</text>
</comment>
<comment type="similarity">
    <text evidence="1">Belongs to the HesB/IscA family.</text>
</comment>
<keyword id="KW-0408">Iron</keyword>
<keyword id="KW-0411">Iron-sulfur</keyword>
<keyword id="KW-0479">Metal-binding</keyword>
<protein>
    <recommendedName>
        <fullName evidence="1">Iron-sulfur cluster insertion protein ErpA</fullName>
    </recommendedName>
</protein>
<evidence type="ECO:0000255" key="1">
    <source>
        <dbReference type="HAMAP-Rule" id="MF_01380"/>
    </source>
</evidence>
<organism>
    <name type="scientific">Yersinia pestis bv. Antiqua (strain Nepal516)</name>
    <dbReference type="NCBI Taxonomy" id="377628"/>
    <lineage>
        <taxon>Bacteria</taxon>
        <taxon>Pseudomonadati</taxon>
        <taxon>Pseudomonadota</taxon>
        <taxon>Gammaproteobacteria</taxon>
        <taxon>Enterobacterales</taxon>
        <taxon>Yersiniaceae</taxon>
        <taxon>Yersinia</taxon>
    </lineage>
</organism>
<reference key="1">
    <citation type="journal article" date="2006" name="J. Bacteriol.">
        <title>Complete genome sequence of Yersinia pestis strains Antiqua and Nepal516: evidence of gene reduction in an emerging pathogen.</title>
        <authorList>
            <person name="Chain P.S.G."/>
            <person name="Hu P."/>
            <person name="Malfatti S.A."/>
            <person name="Radnedge L."/>
            <person name="Larimer F."/>
            <person name="Vergez L.M."/>
            <person name="Worsham P."/>
            <person name="Chu M.C."/>
            <person name="Andersen G.L."/>
        </authorList>
    </citation>
    <scope>NUCLEOTIDE SEQUENCE [LARGE SCALE GENOMIC DNA]</scope>
    <source>
        <strain>Nepal516</strain>
    </source>
</reference>
<reference key="2">
    <citation type="submission" date="2009-04" db="EMBL/GenBank/DDBJ databases">
        <title>Yersinia pestis Nepal516A whole genome shotgun sequencing project.</title>
        <authorList>
            <person name="Plunkett G. III"/>
            <person name="Anderson B.D."/>
            <person name="Baumler D.J."/>
            <person name="Burland V."/>
            <person name="Cabot E.L."/>
            <person name="Glasner J.D."/>
            <person name="Mau B."/>
            <person name="Neeno-Eckwall E."/>
            <person name="Perna N.T."/>
            <person name="Munk A.C."/>
            <person name="Tapia R."/>
            <person name="Green L.D."/>
            <person name="Rogers Y.C."/>
            <person name="Detter J.C."/>
            <person name="Bruce D.C."/>
            <person name="Brettin T.S."/>
        </authorList>
    </citation>
    <scope>NUCLEOTIDE SEQUENCE [LARGE SCALE GENOMIC DNA]</scope>
    <source>
        <strain>Nepal516</strain>
    </source>
</reference>
<accession>Q1CLU5</accession>
<accession>C4GQ69</accession>